<comment type="function">
    <text evidence="1">Catalyzes the cross-linking of a glutamate residue and a tyrosine residue in the PqqA protein as part of the biosynthesis of pyrroloquinoline quinone (PQQ).</text>
</comment>
<comment type="catalytic activity">
    <reaction evidence="1">
        <text>[PQQ precursor protein] + S-adenosyl-L-methionine = E-Y cross-linked-[PQQ precursor protein] + 5'-deoxyadenosine + L-methionine + H(+)</text>
        <dbReference type="Rhea" id="RHEA:56836"/>
        <dbReference type="Rhea" id="RHEA-COMP:14800"/>
        <dbReference type="Rhea" id="RHEA-COMP:14801"/>
        <dbReference type="ChEBI" id="CHEBI:15378"/>
        <dbReference type="ChEBI" id="CHEBI:17319"/>
        <dbReference type="ChEBI" id="CHEBI:57844"/>
        <dbReference type="ChEBI" id="CHEBI:59789"/>
        <dbReference type="ChEBI" id="CHEBI:141026"/>
        <dbReference type="ChEBI" id="CHEBI:141027"/>
        <dbReference type="EC" id="1.21.98.4"/>
    </reaction>
</comment>
<comment type="cofactor">
    <cofactor evidence="1">
        <name>[4Fe-4S] cluster</name>
        <dbReference type="ChEBI" id="CHEBI:49883"/>
    </cofactor>
    <text evidence="1">Binds 1 [4Fe-4S] cluster. The cluster is coordinated with 3 cysteines and an exchangeable S-adenosyl-L-methionine.</text>
</comment>
<comment type="pathway">
    <text evidence="1">Cofactor biosynthesis; pyrroloquinoline quinone biosynthesis.</text>
</comment>
<comment type="subunit">
    <text evidence="1">Interacts with PqqD. The interaction is necessary for activity of PqqE.</text>
</comment>
<comment type="similarity">
    <text evidence="1">Belongs to the radical SAM superfamily. PqqE family.</text>
</comment>
<dbReference type="EC" id="1.21.98.4" evidence="1"/>
<dbReference type="EMBL" id="CP000058">
    <property type="protein sequence ID" value="AAZ37427.1"/>
    <property type="molecule type" value="Genomic_DNA"/>
</dbReference>
<dbReference type="RefSeq" id="WP_004654746.1">
    <property type="nucleotide sequence ID" value="NC_005773.3"/>
</dbReference>
<dbReference type="SMR" id="Q48CT3"/>
<dbReference type="KEGG" id="psp:PSPPH_4708"/>
<dbReference type="eggNOG" id="COG0535">
    <property type="taxonomic scope" value="Bacteria"/>
</dbReference>
<dbReference type="HOGENOM" id="CLU_009273_4_7_6"/>
<dbReference type="UniPathway" id="UPA00539"/>
<dbReference type="Proteomes" id="UP000000551">
    <property type="component" value="Chromosome"/>
</dbReference>
<dbReference type="GO" id="GO:0051539">
    <property type="term" value="F:4 iron, 4 sulfur cluster binding"/>
    <property type="evidence" value="ECO:0007669"/>
    <property type="project" value="UniProtKB-KW"/>
</dbReference>
<dbReference type="GO" id="GO:0009975">
    <property type="term" value="F:cyclase activity"/>
    <property type="evidence" value="ECO:0007669"/>
    <property type="project" value="UniProtKB-UniRule"/>
</dbReference>
<dbReference type="GO" id="GO:0005506">
    <property type="term" value="F:iron ion binding"/>
    <property type="evidence" value="ECO:0007669"/>
    <property type="project" value="UniProtKB-UniRule"/>
</dbReference>
<dbReference type="GO" id="GO:0016491">
    <property type="term" value="F:oxidoreductase activity"/>
    <property type="evidence" value="ECO:0007669"/>
    <property type="project" value="UniProtKB-KW"/>
</dbReference>
<dbReference type="GO" id="GO:1904047">
    <property type="term" value="F:S-adenosyl-L-methionine binding"/>
    <property type="evidence" value="ECO:0007669"/>
    <property type="project" value="UniProtKB-UniRule"/>
</dbReference>
<dbReference type="GO" id="GO:0018189">
    <property type="term" value="P:pyrroloquinoline quinone biosynthetic process"/>
    <property type="evidence" value="ECO:0007669"/>
    <property type="project" value="UniProtKB-UniRule"/>
</dbReference>
<dbReference type="CDD" id="cd01335">
    <property type="entry name" value="Radical_SAM"/>
    <property type="match status" value="1"/>
</dbReference>
<dbReference type="CDD" id="cd21119">
    <property type="entry name" value="SPASM_PqqE"/>
    <property type="match status" value="1"/>
</dbReference>
<dbReference type="Gene3D" id="3.20.20.70">
    <property type="entry name" value="Aldolase class I"/>
    <property type="match status" value="1"/>
</dbReference>
<dbReference type="HAMAP" id="MF_00660">
    <property type="entry name" value="PqqE"/>
    <property type="match status" value="1"/>
</dbReference>
<dbReference type="InterPro" id="IPR023885">
    <property type="entry name" value="4Fe4S-binding_SPASM_dom"/>
</dbReference>
<dbReference type="InterPro" id="IPR013785">
    <property type="entry name" value="Aldolase_TIM"/>
</dbReference>
<dbReference type="InterPro" id="IPR006638">
    <property type="entry name" value="Elp3/MiaA/NifB-like_rSAM"/>
</dbReference>
<dbReference type="InterPro" id="IPR000385">
    <property type="entry name" value="MoaA_NifB_PqqE_Fe-S-bd_CS"/>
</dbReference>
<dbReference type="InterPro" id="IPR011843">
    <property type="entry name" value="PQQ_synth_PqqE_bac"/>
</dbReference>
<dbReference type="InterPro" id="IPR017200">
    <property type="entry name" value="PqqE-like"/>
</dbReference>
<dbReference type="InterPro" id="IPR050377">
    <property type="entry name" value="Radical_SAM_PqqE_MftC-like"/>
</dbReference>
<dbReference type="InterPro" id="IPR007197">
    <property type="entry name" value="rSAM"/>
</dbReference>
<dbReference type="NCBIfam" id="TIGR02109">
    <property type="entry name" value="PQQ_syn_pqqE"/>
    <property type="match status" value="1"/>
</dbReference>
<dbReference type="NCBIfam" id="TIGR04085">
    <property type="entry name" value="rSAM_more_4Fe4S"/>
    <property type="match status" value="1"/>
</dbReference>
<dbReference type="PANTHER" id="PTHR11228:SF7">
    <property type="entry name" value="PQQA PEPTIDE CYCLASE"/>
    <property type="match status" value="1"/>
</dbReference>
<dbReference type="PANTHER" id="PTHR11228">
    <property type="entry name" value="RADICAL SAM DOMAIN PROTEIN"/>
    <property type="match status" value="1"/>
</dbReference>
<dbReference type="Pfam" id="PF13353">
    <property type="entry name" value="Fer4_12"/>
    <property type="match status" value="1"/>
</dbReference>
<dbReference type="Pfam" id="PF04055">
    <property type="entry name" value="Radical_SAM"/>
    <property type="match status" value="1"/>
</dbReference>
<dbReference type="Pfam" id="PF13186">
    <property type="entry name" value="SPASM"/>
    <property type="match status" value="1"/>
</dbReference>
<dbReference type="PIRSF" id="PIRSF037420">
    <property type="entry name" value="PQQ_syn_pqqE"/>
    <property type="match status" value="1"/>
</dbReference>
<dbReference type="SFLD" id="SFLDF00280">
    <property type="entry name" value="coenzyme_PQQ_synthesis_protein"/>
    <property type="match status" value="1"/>
</dbReference>
<dbReference type="SFLD" id="SFLDG01067">
    <property type="entry name" value="SPASM/twitch_domain_containing"/>
    <property type="match status" value="1"/>
</dbReference>
<dbReference type="SMART" id="SM00729">
    <property type="entry name" value="Elp3"/>
    <property type="match status" value="1"/>
</dbReference>
<dbReference type="SUPFAM" id="SSF102114">
    <property type="entry name" value="Radical SAM enzymes"/>
    <property type="match status" value="1"/>
</dbReference>
<dbReference type="PROSITE" id="PS01305">
    <property type="entry name" value="MOAA_NIFB_PQQE"/>
    <property type="match status" value="1"/>
</dbReference>
<dbReference type="PROSITE" id="PS51918">
    <property type="entry name" value="RADICAL_SAM"/>
    <property type="match status" value="1"/>
</dbReference>
<reference key="1">
    <citation type="journal article" date="2005" name="J. Bacteriol.">
        <title>Whole-genome sequence analysis of Pseudomonas syringae pv. phaseolicola 1448A reveals divergence among pathovars in genes involved in virulence and transposition.</title>
        <authorList>
            <person name="Joardar V."/>
            <person name="Lindeberg M."/>
            <person name="Jackson R.W."/>
            <person name="Selengut J."/>
            <person name="Dodson R."/>
            <person name="Brinkac L.M."/>
            <person name="Daugherty S.C."/>
            <person name="DeBoy R.T."/>
            <person name="Durkin A.S."/>
            <person name="Gwinn Giglio M."/>
            <person name="Madupu R."/>
            <person name="Nelson W.C."/>
            <person name="Rosovitz M.J."/>
            <person name="Sullivan S.A."/>
            <person name="Crabtree J."/>
            <person name="Creasy T."/>
            <person name="Davidsen T.M."/>
            <person name="Haft D.H."/>
            <person name="Zafar N."/>
            <person name="Zhou L."/>
            <person name="Halpin R."/>
            <person name="Holley T."/>
            <person name="Khouri H.M."/>
            <person name="Feldblyum T.V."/>
            <person name="White O."/>
            <person name="Fraser C.M."/>
            <person name="Chatterjee A.K."/>
            <person name="Cartinhour S."/>
            <person name="Schneider D."/>
            <person name="Mansfield J.W."/>
            <person name="Collmer A."/>
            <person name="Buell R."/>
        </authorList>
    </citation>
    <scope>NUCLEOTIDE SEQUENCE [LARGE SCALE GENOMIC DNA]</scope>
    <source>
        <strain>1448A / Race 6</strain>
    </source>
</reference>
<name>PQQE_PSE14</name>
<organism>
    <name type="scientific">Pseudomonas savastanoi pv. phaseolicola (strain 1448A / Race 6)</name>
    <name type="common">Pseudomonas syringae pv. phaseolicola (strain 1448A / Race 6)</name>
    <dbReference type="NCBI Taxonomy" id="264730"/>
    <lineage>
        <taxon>Bacteria</taxon>
        <taxon>Pseudomonadati</taxon>
        <taxon>Pseudomonadota</taxon>
        <taxon>Gammaproteobacteria</taxon>
        <taxon>Pseudomonadales</taxon>
        <taxon>Pseudomonadaceae</taxon>
        <taxon>Pseudomonas</taxon>
    </lineage>
</organism>
<proteinExistence type="inferred from homology"/>
<sequence length="389" mass="44034">MSDIAPVTNTPYIPPTPEVGLPLWLLAELTYRCPLQCPYCSNPLDFAKQGQELTTEQWFKVMQEAREMGAAQIGFSGGEPLVRQDLAELIAEARRLGFYTNLITSGIGLTKEKIIAFKEAGLDHIQISFQASDEQVNNMLAGSKKAFAQKLEMAKAVKKHGYPMVLNFVTHRHNIDRIDKIIELCLALEADFVELATCQFYGWAHLNRLGLLPTKDQLVRAEAVTNEYRVRLEAENHPCKLIFVTPDYYEERPKACMNGWGNIFLTVTPDGTALPCHGARQMPIQFPNVRDYSMQHIWYDSFGFNRFRGYDWMPEPCRSCDEKEKDFGGCRCQAFMLTGDAANADPVCSKSYHHGIITQARDESETATQTIEELAFRNDRNSRLIAKSS</sequence>
<accession>Q48CT3</accession>
<feature type="chain" id="PRO_0000219946" description="PqqA peptide cyclase">
    <location>
        <begin position="1"/>
        <end position="389"/>
    </location>
</feature>
<feature type="domain" description="Radical SAM core" evidence="2">
    <location>
        <begin position="19"/>
        <end position="235"/>
    </location>
</feature>
<feature type="binding site" evidence="1">
    <location>
        <position position="33"/>
    </location>
    <ligand>
        <name>[4Fe-4S] cluster</name>
        <dbReference type="ChEBI" id="CHEBI:49883"/>
        <note>4Fe-4S-S-AdoMet</note>
    </ligand>
</feature>
<feature type="binding site" evidence="1">
    <location>
        <position position="37"/>
    </location>
    <ligand>
        <name>[4Fe-4S] cluster</name>
        <dbReference type="ChEBI" id="CHEBI:49883"/>
        <note>4Fe-4S-S-AdoMet</note>
    </ligand>
</feature>
<feature type="binding site" evidence="1">
    <location>
        <position position="40"/>
    </location>
    <ligand>
        <name>[4Fe-4S] cluster</name>
        <dbReference type="ChEBI" id="CHEBI:49883"/>
        <note>4Fe-4S-S-AdoMet</note>
    </ligand>
</feature>
<gene>
    <name evidence="1" type="primary">pqqE</name>
    <name type="ordered locus">PSPPH_4708</name>
</gene>
<evidence type="ECO:0000255" key="1">
    <source>
        <dbReference type="HAMAP-Rule" id="MF_00660"/>
    </source>
</evidence>
<evidence type="ECO:0000255" key="2">
    <source>
        <dbReference type="PROSITE-ProRule" id="PRU01266"/>
    </source>
</evidence>
<protein>
    <recommendedName>
        <fullName evidence="1">PqqA peptide cyclase</fullName>
        <ecNumber evidence="1">1.21.98.4</ecNumber>
    </recommendedName>
    <alternativeName>
        <fullName evidence="1">Coenzyme PQQ synthesis protein E</fullName>
    </alternativeName>
    <alternativeName>
        <fullName evidence="1">Pyrroloquinoline quinone biosynthesis protein E</fullName>
    </alternativeName>
</protein>
<keyword id="KW-0004">4Fe-4S</keyword>
<keyword id="KW-0408">Iron</keyword>
<keyword id="KW-0411">Iron-sulfur</keyword>
<keyword id="KW-0479">Metal-binding</keyword>
<keyword id="KW-0560">Oxidoreductase</keyword>
<keyword id="KW-0884">PQQ biosynthesis</keyword>
<keyword id="KW-0949">S-adenosyl-L-methionine</keyword>